<gene>
    <name type="primary">Rnf144a</name>
    <name type="synonym">Kiaa0161</name>
    <name type="synonym">Rnf144</name>
    <name type="synonym">Ubce7ip4</name>
    <name type="synonym">Uip4</name>
</gene>
<sequence>MTTARYRPTWDLALDPLVSCKLCLGEYPAEQMTTIAQCQCIFCTLCLKQYVELLIKEGLETAISCPDAACPKQGHLQENEIECMVAAEIMQRYKKLQFEREVLFDPCRTWCPASTCQAVCQLQDIGLQTPQLVQCKACDMEFCSACKARWHPGQGCPETMPITFLPGETSSAFKMEEGDAPIKRCPKCRVYIERDEGCAQMMCKNCKHAFCWYCLESLDDDFLLIHYDKGPCRNKLGHSRASVIWHRTQVVGIFAGFGLLLLVASPFLLLATPFVLCCKCKCSKGDDDPLPT</sequence>
<protein>
    <recommendedName>
        <fullName>E3 ubiquitin-protein ligase RNF144A</fullName>
        <ecNumber evidence="1">2.3.2.31</ecNumber>
    </recommendedName>
    <alternativeName>
        <fullName>RING finger protein 144A</fullName>
    </alternativeName>
    <alternativeName>
        <fullName>UbcM4-interacting protein 4</fullName>
    </alternativeName>
    <alternativeName>
        <fullName>Ubiquitin-conjugating enzyme 7-interacting protein 4</fullName>
    </alternativeName>
</protein>
<name>R144A_MOUSE</name>
<dbReference type="EC" id="2.3.2.31" evidence="1"/>
<dbReference type="EMBL" id="AF360998">
    <property type="protein sequence ID" value="AAK51468.1"/>
    <property type="molecule type" value="mRNA"/>
</dbReference>
<dbReference type="EMBL" id="AK038586">
    <property type="protein sequence ID" value="BAC30058.1"/>
    <property type="molecule type" value="mRNA"/>
</dbReference>
<dbReference type="EMBL" id="AK133544">
    <property type="protein sequence ID" value="BAE21715.1"/>
    <property type="molecule type" value="mRNA"/>
</dbReference>
<dbReference type="EMBL" id="AK172904">
    <property type="protein sequence ID" value="BAD32182.1"/>
    <property type="status" value="ALT_INIT"/>
    <property type="molecule type" value="mRNA"/>
</dbReference>
<dbReference type="EMBL" id="BC030187">
    <property type="protein sequence ID" value="AAH30187.1"/>
    <property type="molecule type" value="mRNA"/>
</dbReference>
<dbReference type="CCDS" id="CCDS36425.1"/>
<dbReference type="RefSeq" id="NP_001075446.1">
    <property type="nucleotide sequence ID" value="NM_001081977.3"/>
</dbReference>
<dbReference type="RefSeq" id="NP_001400409.1">
    <property type="nucleotide sequence ID" value="NM_001413480.1"/>
</dbReference>
<dbReference type="RefSeq" id="NP_001400410.1">
    <property type="nucleotide sequence ID" value="NM_001413481.1"/>
</dbReference>
<dbReference type="RefSeq" id="NP_001400411.1">
    <property type="nucleotide sequence ID" value="NM_001413482.1"/>
</dbReference>
<dbReference type="RefSeq" id="NP_001400412.1">
    <property type="nucleotide sequence ID" value="NM_001413483.1"/>
</dbReference>
<dbReference type="RefSeq" id="NP_001400413.1">
    <property type="nucleotide sequence ID" value="NM_001413484.1"/>
</dbReference>
<dbReference type="RefSeq" id="NP_001400414.1">
    <property type="nucleotide sequence ID" value="NM_001413485.1"/>
</dbReference>
<dbReference type="RefSeq" id="NP_542130.1">
    <property type="nucleotide sequence ID" value="NM_080563.5"/>
</dbReference>
<dbReference type="RefSeq" id="XP_006515011.1">
    <property type="nucleotide sequence ID" value="XM_006514948.3"/>
</dbReference>
<dbReference type="RefSeq" id="XP_006515012.1">
    <property type="nucleotide sequence ID" value="XM_006514949.3"/>
</dbReference>
<dbReference type="RefSeq" id="XP_011242109.1">
    <property type="nucleotide sequence ID" value="XM_011243807.2"/>
</dbReference>
<dbReference type="RefSeq" id="XP_030102368.1">
    <property type="nucleotide sequence ID" value="XM_030246508.1"/>
</dbReference>
<dbReference type="BMRB" id="Q925F3"/>
<dbReference type="SMR" id="Q925F3"/>
<dbReference type="BioGRID" id="223824">
    <property type="interactions" value="2"/>
</dbReference>
<dbReference type="FunCoup" id="Q925F3">
    <property type="interactions" value="883"/>
</dbReference>
<dbReference type="STRING" id="10090.ENSMUSP00000020971"/>
<dbReference type="PhosphoSitePlus" id="Q925F3"/>
<dbReference type="PaxDb" id="10090-ENSMUSP00000020971"/>
<dbReference type="ProteomicsDB" id="254891"/>
<dbReference type="Antibodypedia" id="26428">
    <property type="antibodies" value="180 antibodies from 29 providers"/>
</dbReference>
<dbReference type="DNASU" id="108089"/>
<dbReference type="Ensembl" id="ENSMUST00000020971.14">
    <property type="protein sequence ID" value="ENSMUSP00000020971.7"/>
    <property type="gene ID" value="ENSMUSG00000020642.14"/>
</dbReference>
<dbReference type="Ensembl" id="ENSMUST00000062149.6">
    <property type="protein sequence ID" value="ENSMUSP00000056073.5"/>
    <property type="gene ID" value="ENSMUSG00000020642.14"/>
</dbReference>
<dbReference type="GeneID" id="108089"/>
<dbReference type="KEGG" id="mmu:108089"/>
<dbReference type="UCSC" id="uc007nff.2">
    <property type="organism name" value="mouse"/>
</dbReference>
<dbReference type="AGR" id="MGI:1344401"/>
<dbReference type="CTD" id="9781"/>
<dbReference type="MGI" id="MGI:1344401">
    <property type="gene designation" value="Rnf144a"/>
</dbReference>
<dbReference type="VEuPathDB" id="HostDB:ENSMUSG00000020642"/>
<dbReference type="eggNOG" id="KOG1815">
    <property type="taxonomic scope" value="Eukaryota"/>
</dbReference>
<dbReference type="GeneTree" id="ENSGT00940000157701"/>
<dbReference type="HOGENOM" id="CLU_053598_1_0_1"/>
<dbReference type="InParanoid" id="Q925F3"/>
<dbReference type="OMA" id="CMVAAEM"/>
<dbReference type="PhylomeDB" id="Q925F3"/>
<dbReference type="TreeFam" id="TF324777"/>
<dbReference type="Reactome" id="R-MMU-8866654">
    <property type="pathway name" value="E3 ubiquitin ligases ubiquitinate target proteins"/>
</dbReference>
<dbReference type="UniPathway" id="UPA00143"/>
<dbReference type="BioGRID-ORCS" id="108089">
    <property type="hits" value="1 hit in 77 CRISPR screens"/>
</dbReference>
<dbReference type="ChiTaRS" id="Rnf144a">
    <property type="organism name" value="mouse"/>
</dbReference>
<dbReference type="PRO" id="PR:Q925F3"/>
<dbReference type="Proteomes" id="UP000000589">
    <property type="component" value="Chromosome 12"/>
</dbReference>
<dbReference type="RNAct" id="Q925F3">
    <property type="molecule type" value="protein"/>
</dbReference>
<dbReference type="Bgee" id="ENSMUSG00000020642">
    <property type="expression patterns" value="Expressed in granulocyte and 213 other cell types or tissues"/>
</dbReference>
<dbReference type="ExpressionAtlas" id="Q925F3">
    <property type="expression patterns" value="baseline and differential"/>
</dbReference>
<dbReference type="GO" id="GO:0030659">
    <property type="term" value="C:cytoplasmic vesicle membrane"/>
    <property type="evidence" value="ECO:0007669"/>
    <property type="project" value="UniProtKB-SubCell"/>
</dbReference>
<dbReference type="GO" id="GO:0005789">
    <property type="term" value="C:endoplasmic reticulum membrane"/>
    <property type="evidence" value="ECO:0007669"/>
    <property type="project" value="Ensembl"/>
</dbReference>
<dbReference type="GO" id="GO:0005794">
    <property type="term" value="C:Golgi apparatus"/>
    <property type="evidence" value="ECO:0007669"/>
    <property type="project" value="Ensembl"/>
</dbReference>
<dbReference type="GO" id="GO:0005886">
    <property type="term" value="C:plasma membrane"/>
    <property type="evidence" value="ECO:0007669"/>
    <property type="project" value="UniProtKB-SubCell"/>
</dbReference>
<dbReference type="GO" id="GO:0061630">
    <property type="term" value="F:ubiquitin protein ligase activity"/>
    <property type="evidence" value="ECO:0007669"/>
    <property type="project" value="Ensembl"/>
</dbReference>
<dbReference type="GO" id="GO:0008270">
    <property type="term" value="F:zinc ion binding"/>
    <property type="evidence" value="ECO:0007669"/>
    <property type="project" value="UniProtKB-KW"/>
</dbReference>
<dbReference type="GO" id="GO:0002221">
    <property type="term" value="P:pattern recognition receptor signaling pathway"/>
    <property type="evidence" value="ECO:0007669"/>
    <property type="project" value="Ensembl"/>
</dbReference>
<dbReference type="GO" id="GO:0085020">
    <property type="term" value="P:protein K6-linked ubiquitination"/>
    <property type="evidence" value="ECO:0007669"/>
    <property type="project" value="Ensembl"/>
</dbReference>
<dbReference type="CDD" id="cd20366">
    <property type="entry name" value="BRcat_RBR_RNF144A"/>
    <property type="match status" value="1"/>
</dbReference>
<dbReference type="CDD" id="cd16777">
    <property type="entry name" value="mRING-HC-C4C4_RBR_RNF144A"/>
    <property type="match status" value="1"/>
</dbReference>
<dbReference type="CDD" id="cd20352">
    <property type="entry name" value="Rcat_RBR_RNF144"/>
    <property type="match status" value="1"/>
</dbReference>
<dbReference type="FunFam" id="1.20.120.1750:FF:000006">
    <property type="entry name" value="RBR-type E3 ubiquitin transferase"/>
    <property type="match status" value="1"/>
</dbReference>
<dbReference type="FunFam" id="3.30.40.10:FF:000051">
    <property type="entry name" value="RBR-type E3 ubiquitin transferase"/>
    <property type="match status" value="1"/>
</dbReference>
<dbReference type="Gene3D" id="1.20.120.1750">
    <property type="match status" value="1"/>
</dbReference>
<dbReference type="Gene3D" id="3.30.40.10">
    <property type="entry name" value="Zinc/RING finger domain, C3HC4 (zinc finger)"/>
    <property type="match status" value="1"/>
</dbReference>
<dbReference type="InterPro" id="IPR031127">
    <property type="entry name" value="E3_UB_ligase_RBR"/>
</dbReference>
<dbReference type="InterPro" id="IPR002867">
    <property type="entry name" value="IBR_dom"/>
</dbReference>
<dbReference type="InterPro" id="IPR044066">
    <property type="entry name" value="TRIAD_supradom"/>
</dbReference>
<dbReference type="InterPro" id="IPR001841">
    <property type="entry name" value="Znf_RING"/>
</dbReference>
<dbReference type="InterPro" id="IPR013083">
    <property type="entry name" value="Znf_RING/FYVE/PHD"/>
</dbReference>
<dbReference type="InterPro" id="IPR017907">
    <property type="entry name" value="Znf_RING_CS"/>
</dbReference>
<dbReference type="PANTHER" id="PTHR11685">
    <property type="entry name" value="RBR FAMILY RING FINGER AND IBR DOMAIN-CONTAINING"/>
    <property type="match status" value="1"/>
</dbReference>
<dbReference type="Pfam" id="PF01485">
    <property type="entry name" value="IBR"/>
    <property type="match status" value="1"/>
</dbReference>
<dbReference type="Pfam" id="PF22191">
    <property type="entry name" value="IBR_1"/>
    <property type="match status" value="1"/>
</dbReference>
<dbReference type="SMART" id="SM00647">
    <property type="entry name" value="IBR"/>
    <property type="match status" value="2"/>
</dbReference>
<dbReference type="SUPFAM" id="SSF57850">
    <property type="entry name" value="RING/U-box"/>
    <property type="match status" value="3"/>
</dbReference>
<dbReference type="PROSITE" id="PS51873">
    <property type="entry name" value="TRIAD"/>
    <property type="match status" value="1"/>
</dbReference>
<dbReference type="PROSITE" id="PS00518">
    <property type="entry name" value="ZF_RING_1"/>
    <property type="match status" value="1"/>
</dbReference>
<dbReference type="PROSITE" id="PS50089">
    <property type="entry name" value="ZF_RING_2"/>
    <property type="match status" value="1"/>
</dbReference>
<proteinExistence type="evidence at protein level"/>
<evidence type="ECO:0000250" key="1">
    <source>
        <dbReference type="UniProtKB" id="O60260"/>
    </source>
</evidence>
<evidence type="ECO:0000250" key="2">
    <source>
        <dbReference type="UniProtKB" id="P50876"/>
    </source>
</evidence>
<evidence type="ECO:0000255" key="3"/>
<evidence type="ECO:0000255" key="4">
    <source>
        <dbReference type="PROSITE-ProRule" id="PRU01221"/>
    </source>
</evidence>
<evidence type="ECO:0000269" key="5">
    <source>
    </source>
</evidence>
<evidence type="ECO:0000305" key="6"/>
<keyword id="KW-1003">Cell membrane</keyword>
<keyword id="KW-0968">Cytoplasmic vesicle</keyword>
<keyword id="KW-0472">Membrane</keyword>
<keyword id="KW-0479">Metal-binding</keyword>
<keyword id="KW-1185">Reference proteome</keyword>
<keyword id="KW-0677">Repeat</keyword>
<keyword id="KW-0808">Transferase</keyword>
<keyword id="KW-0812">Transmembrane</keyword>
<keyword id="KW-1133">Transmembrane helix</keyword>
<keyword id="KW-0832">Ubl conjugation</keyword>
<keyword id="KW-0833">Ubl conjugation pathway</keyword>
<keyword id="KW-0862">Zinc</keyword>
<keyword id="KW-0863">Zinc-finger</keyword>
<feature type="chain" id="PRO_0000056299" description="E3 ubiquitin-protein ligase RNF144A">
    <location>
        <begin position="1"/>
        <end position="292"/>
    </location>
</feature>
<feature type="transmembrane region" description="Helical" evidence="3">
    <location>
        <begin position="250"/>
        <end position="270"/>
    </location>
</feature>
<feature type="zinc finger region" description="RING-type 1" evidence="4">
    <location>
        <begin position="20"/>
        <end position="70"/>
    </location>
</feature>
<feature type="zinc finger region" description="IBR-type" evidence="4">
    <location>
        <begin position="91"/>
        <end position="156"/>
    </location>
</feature>
<feature type="zinc finger region" description="RING-type 2; atypical" evidence="4">
    <location>
        <begin position="185"/>
        <end position="214"/>
    </location>
</feature>
<feature type="region of interest" description="TRIAD supradomain" evidence="4">
    <location>
        <begin position="16"/>
        <end position="236"/>
    </location>
</feature>
<feature type="active site" evidence="4">
    <location>
        <position position="198"/>
    </location>
</feature>
<feature type="binding site" evidence="4">
    <location>
        <position position="20"/>
    </location>
    <ligand>
        <name>Zn(2+)</name>
        <dbReference type="ChEBI" id="CHEBI:29105"/>
        <label>1</label>
    </ligand>
</feature>
<feature type="binding site" evidence="4">
    <location>
        <position position="23"/>
    </location>
    <ligand>
        <name>Zn(2+)</name>
        <dbReference type="ChEBI" id="CHEBI:29105"/>
        <label>1</label>
    </ligand>
</feature>
<feature type="binding site" evidence="4">
    <location>
        <position position="43"/>
    </location>
    <ligand>
        <name>Zn(2+)</name>
        <dbReference type="ChEBI" id="CHEBI:29105"/>
        <label>1</label>
    </ligand>
</feature>
<feature type="binding site" evidence="4">
    <location>
        <position position="46"/>
    </location>
    <ligand>
        <name>Zn(2+)</name>
        <dbReference type="ChEBI" id="CHEBI:29105"/>
        <label>1</label>
    </ligand>
</feature>
<feature type="binding site" evidence="4">
    <location>
        <position position="111"/>
    </location>
    <ligand>
        <name>Zn(2+)</name>
        <dbReference type="ChEBI" id="CHEBI:29105"/>
        <label>2</label>
    </ligand>
</feature>
<feature type="binding site" evidence="4">
    <location>
        <position position="116"/>
    </location>
    <ligand>
        <name>Zn(2+)</name>
        <dbReference type="ChEBI" id="CHEBI:29105"/>
        <label>2</label>
    </ligand>
</feature>
<feature type="binding site" evidence="4">
    <location>
        <position position="135"/>
    </location>
    <ligand>
        <name>Zn(2+)</name>
        <dbReference type="ChEBI" id="CHEBI:29105"/>
        <label>2</label>
    </ligand>
</feature>
<feature type="binding site" evidence="4">
    <location>
        <position position="138"/>
    </location>
    <ligand>
        <name>Zn(2+)</name>
        <dbReference type="ChEBI" id="CHEBI:29105"/>
        <label>2</label>
    </ligand>
</feature>
<feature type="binding site" evidence="4">
    <location>
        <position position="143"/>
    </location>
    <ligand>
        <name>Zn(2+)</name>
        <dbReference type="ChEBI" id="CHEBI:29105"/>
        <label>3</label>
    </ligand>
</feature>
<feature type="binding site" evidence="4">
    <location>
        <position position="146"/>
    </location>
    <ligand>
        <name>Zn(2+)</name>
        <dbReference type="ChEBI" id="CHEBI:29105"/>
        <label>3</label>
    </ligand>
</feature>
<feature type="binding site" evidence="4">
    <location>
        <position position="151"/>
    </location>
    <ligand>
        <name>Zn(2+)</name>
        <dbReference type="ChEBI" id="CHEBI:29105"/>
        <label>3</label>
    </ligand>
</feature>
<feature type="binding site" evidence="4">
    <location>
        <position position="156"/>
    </location>
    <ligand>
        <name>Zn(2+)</name>
        <dbReference type="ChEBI" id="CHEBI:29105"/>
        <label>3</label>
    </ligand>
</feature>
<feature type="binding site" evidence="4">
    <location>
        <position position="185"/>
    </location>
    <ligand>
        <name>Zn(2+)</name>
        <dbReference type="ChEBI" id="CHEBI:29105"/>
        <label>4</label>
    </ligand>
</feature>
<feature type="binding site" evidence="4">
    <location>
        <position position="188"/>
    </location>
    <ligand>
        <name>Zn(2+)</name>
        <dbReference type="ChEBI" id="CHEBI:29105"/>
        <label>4</label>
    </ligand>
</feature>
<feature type="binding site" evidence="4">
    <location>
        <position position="203"/>
    </location>
    <ligand>
        <name>Zn(2+)</name>
        <dbReference type="ChEBI" id="CHEBI:29105"/>
        <label>4</label>
    </ligand>
</feature>
<feature type="binding site" evidence="4">
    <location>
        <position position="206"/>
    </location>
    <ligand>
        <name>Zn(2+)</name>
        <dbReference type="ChEBI" id="CHEBI:29105"/>
        <label>4</label>
    </ligand>
</feature>
<feature type="binding site" evidence="4">
    <location>
        <position position="211"/>
    </location>
    <ligand>
        <name>Zn(2+)</name>
        <dbReference type="ChEBI" id="CHEBI:29105"/>
        <label>5</label>
    </ligand>
</feature>
<feature type="binding site" evidence="4">
    <location>
        <position position="214"/>
    </location>
    <ligand>
        <name>Zn(2+)</name>
        <dbReference type="ChEBI" id="CHEBI:29105"/>
        <label>5</label>
    </ligand>
</feature>
<feature type="binding site" evidence="4">
    <location>
        <position position="226"/>
    </location>
    <ligand>
        <name>Zn(2+)</name>
        <dbReference type="ChEBI" id="CHEBI:29105"/>
        <label>5</label>
    </ligand>
</feature>
<feature type="binding site" evidence="4">
    <location>
        <position position="232"/>
    </location>
    <ligand>
        <name>Zn(2+)</name>
        <dbReference type="ChEBI" id="CHEBI:29105"/>
        <label>5</label>
    </ligand>
</feature>
<organism>
    <name type="scientific">Mus musculus</name>
    <name type="common">Mouse</name>
    <dbReference type="NCBI Taxonomy" id="10090"/>
    <lineage>
        <taxon>Eukaryota</taxon>
        <taxon>Metazoa</taxon>
        <taxon>Chordata</taxon>
        <taxon>Craniata</taxon>
        <taxon>Vertebrata</taxon>
        <taxon>Euteleostomi</taxon>
        <taxon>Mammalia</taxon>
        <taxon>Eutheria</taxon>
        <taxon>Euarchontoglires</taxon>
        <taxon>Glires</taxon>
        <taxon>Rodentia</taxon>
        <taxon>Myomorpha</taxon>
        <taxon>Muroidea</taxon>
        <taxon>Muridae</taxon>
        <taxon>Murinae</taxon>
        <taxon>Mus</taxon>
        <taxon>Mus</taxon>
    </lineage>
</organism>
<reference key="1">
    <citation type="journal article" date="1999" name="FEBS Lett.">
        <title>A family of structurally related RING finger proteins interacts specifically with the ubiquitin-conjugating enzyme UbcM4.</title>
        <authorList>
            <person name="Martinez-Noel G."/>
            <person name="Niedenthal R."/>
            <person name="Tamura T."/>
            <person name="Harbers K."/>
        </authorList>
    </citation>
    <scope>NUCLEOTIDE SEQUENCE [MRNA]</scope>
    <scope>INTERACTION WITH UBE2L3</scope>
</reference>
<reference key="2">
    <citation type="journal article" date="2005" name="Science">
        <title>The transcriptional landscape of the mammalian genome.</title>
        <authorList>
            <person name="Carninci P."/>
            <person name="Kasukawa T."/>
            <person name="Katayama S."/>
            <person name="Gough J."/>
            <person name="Frith M.C."/>
            <person name="Maeda N."/>
            <person name="Oyama R."/>
            <person name="Ravasi T."/>
            <person name="Lenhard B."/>
            <person name="Wells C."/>
            <person name="Kodzius R."/>
            <person name="Shimokawa K."/>
            <person name="Bajic V.B."/>
            <person name="Brenner S.E."/>
            <person name="Batalov S."/>
            <person name="Forrest A.R."/>
            <person name="Zavolan M."/>
            <person name="Davis M.J."/>
            <person name="Wilming L.G."/>
            <person name="Aidinis V."/>
            <person name="Allen J.E."/>
            <person name="Ambesi-Impiombato A."/>
            <person name="Apweiler R."/>
            <person name="Aturaliya R.N."/>
            <person name="Bailey T.L."/>
            <person name="Bansal M."/>
            <person name="Baxter L."/>
            <person name="Beisel K.W."/>
            <person name="Bersano T."/>
            <person name="Bono H."/>
            <person name="Chalk A.M."/>
            <person name="Chiu K.P."/>
            <person name="Choudhary V."/>
            <person name="Christoffels A."/>
            <person name="Clutterbuck D.R."/>
            <person name="Crowe M.L."/>
            <person name="Dalla E."/>
            <person name="Dalrymple B.P."/>
            <person name="de Bono B."/>
            <person name="Della Gatta G."/>
            <person name="di Bernardo D."/>
            <person name="Down T."/>
            <person name="Engstrom P."/>
            <person name="Fagiolini M."/>
            <person name="Faulkner G."/>
            <person name="Fletcher C.F."/>
            <person name="Fukushima T."/>
            <person name="Furuno M."/>
            <person name="Futaki S."/>
            <person name="Gariboldi M."/>
            <person name="Georgii-Hemming P."/>
            <person name="Gingeras T.R."/>
            <person name="Gojobori T."/>
            <person name="Green R.E."/>
            <person name="Gustincich S."/>
            <person name="Harbers M."/>
            <person name="Hayashi Y."/>
            <person name="Hensch T.K."/>
            <person name="Hirokawa N."/>
            <person name="Hill D."/>
            <person name="Huminiecki L."/>
            <person name="Iacono M."/>
            <person name="Ikeo K."/>
            <person name="Iwama A."/>
            <person name="Ishikawa T."/>
            <person name="Jakt M."/>
            <person name="Kanapin A."/>
            <person name="Katoh M."/>
            <person name="Kawasawa Y."/>
            <person name="Kelso J."/>
            <person name="Kitamura H."/>
            <person name="Kitano H."/>
            <person name="Kollias G."/>
            <person name="Krishnan S.P."/>
            <person name="Kruger A."/>
            <person name="Kummerfeld S.K."/>
            <person name="Kurochkin I.V."/>
            <person name="Lareau L.F."/>
            <person name="Lazarevic D."/>
            <person name="Lipovich L."/>
            <person name="Liu J."/>
            <person name="Liuni S."/>
            <person name="McWilliam S."/>
            <person name="Madan Babu M."/>
            <person name="Madera M."/>
            <person name="Marchionni L."/>
            <person name="Matsuda H."/>
            <person name="Matsuzawa S."/>
            <person name="Miki H."/>
            <person name="Mignone F."/>
            <person name="Miyake S."/>
            <person name="Morris K."/>
            <person name="Mottagui-Tabar S."/>
            <person name="Mulder N."/>
            <person name="Nakano N."/>
            <person name="Nakauchi H."/>
            <person name="Ng P."/>
            <person name="Nilsson R."/>
            <person name="Nishiguchi S."/>
            <person name="Nishikawa S."/>
            <person name="Nori F."/>
            <person name="Ohara O."/>
            <person name="Okazaki Y."/>
            <person name="Orlando V."/>
            <person name="Pang K.C."/>
            <person name="Pavan W.J."/>
            <person name="Pavesi G."/>
            <person name="Pesole G."/>
            <person name="Petrovsky N."/>
            <person name="Piazza S."/>
            <person name="Reed J."/>
            <person name="Reid J.F."/>
            <person name="Ring B.Z."/>
            <person name="Ringwald M."/>
            <person name="Rost B."/>
            <person name="Ruan Y."/>
            <person name="Salzberg S.L."/>
            <person name="Sandelin A."/>
            <person name="Schneider C."/>
            <person name="Schoenbach C."/>
            <person name="Sekiguchi K."/>
            <person name="Semple C.A."/>
            <person name="Seno S."/>
            <person name="Sessa L."/>
            <person name="Sheng Y."/>
            <person name="Shibata Y."/>
            <person name="Shimada H."/>
            <person name="Shimada K."/>
            <person name="Silva D."/>
            <person name="Sinclair B."/>
            <person name="Sperling S."/>
            <person name="Stupka E."/>
            <person name="Sugiura K."/>
            <person name="Sultana R."/>
            <person name="Takenaka Y."/>
            <person name="Taki K."/>
            <person name="Tammoja K."/>
            <person name="Tan S.L."/>
            <person name="Tang S."/>
            <person name="Taylor M.S."/>
            <person name="Tegner J."/>
            <person name="Teichmann S.A."/>
            <person name="Ueda H.R."/>
            <person name="van Nimwegen E."/>
            <person name="Verardo R."/>
            <person name="Wei C.L."/>
            <person name="Yagi K."/>
            <person name="Yamanishi H."/>
            <person name="Zabarovsky E."/>
            <person name="Zhu S."/>
            <person name="Zimmer A."/>
            <person name="Hide W."/>
            <person name="Bult C."/>
            <person name="Grimmond S.M."/>
            <person name="Teasdale R.D."/>
            <person name="Liu E.T."/>
            <person name="Brusic V."/>
            <person name="Quackenbush J."/>
            <person name="Wahlestedt C."/>
            <person name="Mattick J.S."/>
            <person name="Hume D.A."/>
            <person name="Kai C."/>
            <person name="Sasaki D."/>
            <person name="Tomaru Y."/>
            <person name="Fukuda S."/>
            <person name="Kanamori-Katayama M."/>
            <person name="Suzuki M."/>
            <person name="Aoki J."/>
            <person name="Arakawa T."/>
            <person name="Iida J."/>
            <person name="Imamura K."/>
            <person name="Itoh M."/>
            <person name="Kato T."/>
            <person name="Kawaji H."/>
            <person name="Kawagashira N."/>
            <person name="Kawashima T."/>
            <person name="Kojima M."/>
            <person name="Kondo S."/>
            <person name="Konno H."/>
            <person name="Nakano K."/>
            <person name="Ninomiya N."/>
            <person name="Nishio T."/>
            <person name="Okada M."/>
            <person name="Plessy C."/>
            <person name="Shibata K."/>
            <person name="Shiraki T."/>
            <person name="Suzuki S."/>
            <person name="Tagami M."/>
            <person name="Waki K."/>
            <person name="Watahiki A."/>
            <person name="Okamura-Oho Y."/>
            <person name="Suzuki H."/>
            <person name="Kawai J."/>
            <person name="Hayashizaki Y."/>
        </authorList>
    </citation>
    <scope>NUCLEOTIDE SEQUENCE [LARGE SCALE MRNA]</scope>
    <source>
        <strain>C57BL/6J</strain>
        <tissue>Hypothalamus</tissue>
        <tissue>Xiphoid cartilage</tissue>
    </source>
</reference>
<reference key="3">
    <citation type="journal article" date="2004" name="DNA Res.">
        <title>Prediction of the coding sequences of mouse homologues of KIAA gene: IV. The complete nucleotide sequences of 500 mouse KIAA-homologous cDNAs identified by screening of terminal sequences of cDNA clones randomly sampled from size-fractionated libraries.</title>
        <authorList>
            <person name="Okazaki N."/>
            <person name="Kikuno R."/>
            <person name="Ohara R."/>
            <person name="Inamoto S."/>
            <person name="Koseki H."/>
            <person name="Hiraoka S."/>
            <person name="Saga Y."/>
            <person name="Seino S."/>
            <person name="Nishimura M."/>
            <person name="Kaisho T."/>
            <person name="Hoshino K."/>
            <person name="Kitamura H."/>
            <person name="Nagase T."/>
            <person name="Ohara O."/>
            <person name="Koga H."/>
        </authorList>
    </citation>
    <scope>NUCLEOTIDE SEQUENCE [LARGE SCALE MRNA]</scope>
    <source>
        <tissue>Fetal brain</tissue>
    </source>
</reference>
<reference key="4">
    <citation type="journal article" date="2004" name="Genome Res.">
        <title>The status, quality, and expansion of the NIH full-length cDNA project: the Mammalian Gene Collection (MGC).</title>
        <authorList>
            <consortium name="The MGC Project Team"/>
        </authorList>
    </citation>
    <scope>NUCLEOTIDE SEQUENCE [LARGE SCALE MRNA]</scope>
</reference>
<accession>Q925F3</accession>
<accession>Q3UZZ0</accession>
<accession>Q6A0B4</accession>
<comment type="function">
    <text evidence="2">E3 ubiquitin-protein ligase which accepts ubiquitin from E2 ubiquitin-conjugating enzymes UBE2L3 and UBE2L6 in the form of a thioester and then directly transfers the ubiquitin to targeted substrates. Mediates the ubiquitination and degradation of the DNA damage kinase PRKDC during DNA damage. Positively regulates DNA virus or exogenous cytosolic DNA-triggered innate immune response by mediating STING1 ubiquitination and increasing its 'Lys-6'-linked ubiquitination and translocation from the endoplasmic reticulum to the Golgi leading to downstream signaling pathways. Plays a positive role in EGF-dependent cell proliferation by prolonging EGF/EGFR signaling during EGF stimulation through EGFR ubiquitination. Increases ERK activity independently of EGFR signaling by promoting polyubiquitination and subsequent degradation of VRK3 in the cytosol.</text>
</comment>
<comment type="catalytic activity">
    <reaction evidence="1">
        <text>[E2 ubiquitin-conjugating enzyme]-S-ubiquitinyl-L-cysteine + [acceptor protein]-L-lysine = [E2 ubiquitin-conjugating enzyme]-L-cysteine + [acceptor protein]-N(6)-ubiquitinyl-L-lysine.</text>
        <dbReference type="EC" id="2.3.2.31"/>
    </reaction>
</comment>
<comment type="pathway">
    <text>Protein modification; protein ubiquitination.</text>
</comment>
<comment type="subunit">
    <text evidence="2 5">Self-associates. Interacts with UBE2L3 (PubMed:10431818).</text>
</comment>
<comment type="subcellular location">
    <subcellularLocation>
        <location evidence="2">Cell membrane</location>
        <topology evidence="6">Single-pass membrane protein</topology>
    </subcellularLocation>
    <subcellularLocation>
        <location evidence="2">Cytoplasmic vesicle membrane</location>
    </subcellularLocation>
</comment>
<comment type="domain">
    <text evidence="1">Members of the RBR family are atypical E3 ligases. They interact with the E2 conjugating enzyme UBE2L3 and function like HECT-type E3 enzymes: they bind E2s via the first RING domain, but require an obligate trans-thiolation step during the ubiquitin transfer, requiring a conserved cysteine residue in the second RING domain.</text>
</comment>
<comment type="PTM">
    <text evidence="2">Autoubiquitinated.</text>
</comment>
<comment type="similarity">
    <text evidence="6">Belongs to the RBR family. RNF144 subfamily.</text>
</comment>
<comment type="caution">
    <text evidence="6">Lacks the His residue in the RING-type domain 2 that is one of the conserved features of the family.</text>
</comment>
<comment type="sequence caution" evidence="6">
    <conflict type="erroneous initiation">
        <sequence resource="EMBL-CDS" id="BAD32182"/>
    </conflict>
</comment>